<sequence length="112" mass="12923">MSDPRERIPPGNSGEETIGKAFEWLNRTVEEINRAAVNHLPRELIFQVWRRSWEYWHDEMGMSESYTKYRYLCLIQKALFVHCKKGCRCLGEEHGAGGWRTGPPPPPPPGLA</sequence>
<comment type="function">
    <text evidence="1">Plays a role in nuclear translocation of the viral pre-integration complex (PIC), thus is required for the virus to infect non-dividing cells. Targets specific host proteins for degradation by the 26S proteasome. Acts by associating with the cellular CUL4A-DDB1 E3 ligase complex through direct interaction with host VPRPB/DCAF-1. This change in the E3 ligase substrate specificity results in the degradation of host SAMHD1. In turn, SAMHD1 depletion allows viral replication in host myeloid cells by preventing SAMHD1-mediated hydrolysis of intracellular dNTPs necessary for reverse transcription (By similarity).</text>
</comment>
<comment type="subunit">
    <text evidence="1">Interacts with the P6 region of unprocessed GAG. Interacts with host VPRBP/DCAF1, leading to change substrate specificity of the CUL4A-DDB1 E3 ligase complex (By similarity).</text>
</comment>
<comment type="subcellular location">
    <subcellularLocation>
        <location>Virion</location>
    </subcellularLocation>
    <subcellularLocation>
        <location>Host nucleus</location>
    </subcellularLocation>
    <text evidence="1">Nuclear just after virion uncoating, or if expressed in the absence of unprocessed GAG.</text>
</comment>
<comment type="similarity">
    <text evidence="3">Belongs to the lentivirus VPX protein family.</text>
</comment>
<feature type="chain" id="PRO_0000085406" description="Protein Vpx">
    <location>
        <begin position="1"/>
        <end position="112"/>
    </location>
</feature>
<feature type="region of interest" description="Disordered" evidence="2">
    <location>
        <begin position="93"/>
        <end position="112"/>
    </location>
</feature>
<feature type="short sequence motif" description="Nuclear localization signal" evidence="1">
    <location>
        <begin position="65"/>
        <end position="72"/>
    </location>
</feature>
<feature type="compositionally biased region" description="Pro residues" evidence="2">
    <location>
        <begin position="102"/>
        <end position="112"/>
    </location>
</feature>
<reference key="1">
    <citation type="journal article" date="1989" name="Nature">
        <title>An African primate lentivirus (SIVsm) closely related to HIV-2.</title>
        <authorList>
            <person name="Hirsch V.M."/>
            <person name="Olmstead R.A."/>
            <person name="Murphey-Corb M."/>
            <person name="Purcell R.H."/>
            <person name="Johnson P.R."/>
        </authorList>
    </citation>
    <scope>NUCLEOTIDE SEQUENCE [GENOMIC DNA]</scope>
</reference>
<accession>P12514</accession>
<protein>
    <recommendedName>
        <fullName>Protein Vpx</fullName>
    </recommendedName>
    <alternativeName>
        <fullName>Viral protein X</fullName>
    </alternativeName>
    <alternativeName>
        <fullName>X ORF protein</fullName>
    </alternativeName>
</protein>
<dbReference type="EMBL" id="X14307">
    <property type="protein sequence ID" value="CAA32485.1"/>
    <property type="molecule type" value="Genomic_DNA"/>
</dbReference>
<dbReference type="PIR" id="S07990">
    <property type="entry name" value="S07990"/>
</dbReference>
<dbReference type="SMR" id="P12514"/>
<dbReference type="Proteomes" id="UP000008173">
    <property type="component" value="Segment"/>
</dbReference>
<dbReference type="GO" id="GO:0042025">
    <property type="term" value="C:host cell nucleus"/>
    <property type="evidence" value="ECO:0007669"/>
    <property type="project" value="UniProtKB-SubCell"/>
</dbReference>
<dbReference type="GO" id="GO:0044423">
    <property type="term" value="C:virion component"/>
    <property type="evidence" value="ECO:0007669"/>
    <property type="project" value="UniProtKB-KW"/>
</dbReference>
<dbReference type="GO" id="GO:0052170">
    <property type="term" value="P:symbiont-mediated suppression of host innate immune response"/>
    <property type="evidence" value="ECO:0007669"/>
    <property type="project" value="UniProtKB-KW"/>
</dbReference>
<dbReference type="GO" id="GO:0019058">
    <property type="term" value="P:viral life cycle"/>
    <property type="evidence" value="ECO:0007669"/>
    <property type="project" value="InterPro"/>
</dbReference>
<dbReference type="Gene3D" id="1.20.5.4730">
    <property type="match status" value="1"/>
</dbReference>
<dbReference type="InterPro" id="IPR053711">
    <property type="entry name" value="Lentiviral_Vpx_assoc_factor"/>
</dbReference>
<dbReference type="InterPro" id="IPR000012">
    <property type="entry name" value="RetroV_VpR/X"/>
</dbReference>
<dbReference type="Pfam" id="PF00522">
    <property type="entry name" value="VPR"/>
    <property type="match status" value="1"/>
</dbReference>
<evidence type="ECO:0000250" key="1"/>
<evidence type="ECO:0000256" key="2">
    <source>
        <dbReference type="SAM" id="MobiDB-lite"/>
    </source>
</evidence>
<evidence type="ECO:0000305" key="3"/>
<gene>
    <name type="primary">vpx</name>
</gene>
<name>VPX_SIVS4</name>
<proteinExistence type="inferred from homology"/>
<keyword id="KW-1048">Host nucleus</keyword>
<keyword id="KW-0945">Host-virus interaction</keyword>
<keyword id="KW-1090">Inhibition of host innate immune response by virus</keyword>
<keyword id="KW-0899">Viral immunoevasion</keyword>
<keyword id="KW-0946">Virion</keyword>
<organismHost>
    <name type="scientific">Cercopithecidae</name>
    <name type="common">Old World monkeys</name>
    <dbReference type="NCBI Taxonomy" id="9527"/>
</organismHost>
<organism>
    <name type="scientific">Simian immunodeficiency virus (isolate F236/smH4)</name>
    <name type="common">SIV-sm</name>
    <name type="synonym">Simian immunodeficiency virus sooty mangabey monkey</name>
    <dbReference type="NCBI Taxonomy" id="11737"/>
    <lineage>
        <taxon>Viruses</taxon>
        <taxon>Riboviria</taxon>
        <taxon>Pararnavirae</taxon>
        <taxon>Artverviricota</taxon>
        <taxon>Revtraviricetes</taxon>
        <taxon>Ortervirales</taxon>
        <taxon>Retroviridae</taxon>
        <taxon>Orthoretrovirinae</taxon>
        <taxon>Lentivirus</taxon>
        <taxon>Simian immunodeficiency virus</taxon>
    </lineage>
</organism>